<name>EX7S_STRT2</name>
<comment type="function">
    <text evidence="1">Bidirectionally degrades single-stranded DNA into large acid-insoluble oligonucleotides, which are then degraded further into small acid-soluble oligonucleotides.</text>
</comment>
<comment type="catalytic activity">
    <reaction evidence="1">
        <text>Exonucleolytic cleavage in either 5'- to 3'- or 3'- to 5'-direction to yield nucleoside 5'-phosphates.</text>
        <dbReference type="EC" id="3.1.11.6"/>
    </reaction>
</comment>
<comment type="subunit">
    <text evidence="1">Heterooligomer composed of large and small subunits.</text>
</comment>
<comment type="subcellular location">
    <subcellularLocation>
        <location evidence="1">Cytoplasm</location>
    </subcellularLocation>
</comment>
<comment type="similarity">
    <text evidence="1">Belongs to the XseB family.</text>
</comment>
<organism>
    <name type="scientific">Streptococcus thermophilus (strain ATCC BAA-250 / LMG 18311)</name>
    <dbReference type="NCBI Taxonomy" id="264199"/>
    <lineage>
        <taxon>Bacteria</taxon>
        <taxon>Bacillati</taxon>
        <taxon>Bacillota</taxon>
        <taxon>Bacilli</taxon>
        <taxon>Lactobacillales</taxon>
        <taxon>Streptococcaceae</taxon>
        <taxon>Streptococcus</taxon>
    </lineage>
</organism>
<gene>
    <name evidence="1" type="primary">xseB</name>
    <name type="ordered locus">stu1217</name>
</gene>
<keyword id="KW-0963">Cytoplasm</keyword>
<keyword id="KW-0269">Exonuclease</keyword>
<keyword id="KW-0378">Hydrolase</keyword>
<keyword id="KW-0540">Nuclease</keyword>
<keyword id="KW-1185">Reference proteome</keyword>
<protein>
    <recommendedName>
        <fullName evidence="1">Exodeoxyribonuclease 7 small subunit</fullName>
        <ecNumber evidence="1">3.1.11.6</ecNumber>
    </recommendedName>
    <alternativeName>
        <fullName evidence="1">Exodeoxyribonuclease VII small subunit</fullName>
        <shortName evidence="1">Exonuclease VII small subunit</shortName>
    </alternativeName>
</protein>
<evidence type="ECO:0000255" key="1">
    <source>
        <dbReference type="HAMAP-Rule" id="MF_00337"/>
    </source>
</evidence>
<feature type="chain" id="PRO_0000207023" description="Exodeoxyribonuclease 7 small subunit">
    <location>
        <begin position="1"/>
        <end position="71"/>
    </location>
</feature>
<reference key="1">
    <citation type="journal article" date="2004" name="Nat. Biotechnol.">
        <title>Complete sequence and comparative genome analysis of the dairy bacterium Streptococcus thermophilus.</title>
        <authorList>
            <person name="Bolotin A."/>
            <person name="Quinquis B."/>
            <person name="Renault P."/>
            <person name="Sorokin A."/>
            <person name="Ehrlich S.D."/>
            <person name="Kulakauskas S."/>
            <person name="Lapidus A."/>
            <person name="Goltsman E."/>
            <person name="Mazur M."/>
            <person name="Pusch G.D."/>
            <person name="Fonstein M."/>
            <person name="Overbeek R."/>
            <person name="Kyprides N."/>
            <person name="Purnelle B."/>
            <person name="Prozzi D."/>
            <person name="Ngui K."/>
            <person name="Masuy D."/>
            <person name="Hancy F."/>
            <person name="Burteau S."/>
            <person name="Boutry M."/>
            <person name="Delcour J."/>
            <person name="Goffeau A."/>
            <person name="Hols P."/>
        </authorList>
    </citation>
    <scope>NUCLEOTIDE SEQUENCE [LARGE SCALE GENOMIC DNA]</scope>
    <source>
        <strain>ATCC BAA-250 / LMG 18311</strain>
    </source>
</reference>
<accession>Q5M3Z2</accession>
<dbReference type="EC" id="3.1.11.6" evidence="1"/>
<dbReference type="EMBL" id="CP000023">
    <property type="protein sequence ID" value="AAV60851.1"/>
    <property type="molecule type" value="Genomic_DNA"/>
</dbReference>
<dbReference type="RefSeq" id="WP_002951008.1">
    <property type="nucleotide sequence ID" value="NC_006448.1"/>
</dbReference>
<dbReference type="SMR" id="Q5M3Z2"/>
<dbReference type="STRING" id="264199.stu1217"/>
<dbReference type="KEGG" id="stl:stu1217"/>
<dbReference type="eggNOG" id="COG1722">
    <property type="taxonomic scope" value="Bacteria"/>
</dbReference>
<dbReference type="HOGENOM" id="CLU_145918_3_2_9"/>
<dbReference type="Proteomes" id="UP000001170">
    <property type="component" value="Chromosome"/>
</dbReference>
<dbReference type="GO" id="GO:0005829">
    <property type="term" value="C:cytosol"/>
    <property type="evidence" value="ECO:0007669"/>
    <property type="project" value="TreeGrafter"/>
</dbReference>
<dbReference type="GO" id="GO:0009318">
    <property type="term" value="C:exodeoxyribonuclease VII complex"/>
    <property type="evidence" value="ECO:0007669"/>
    <property type="project" value="InterPro"/>
</dbReference>
<dbReference type="GO" id="GO:0008855">
    <property type="term" value="F:exodeoxyribonuclease VII activity"/>
    <property type="evidence" value="ECO:0007669"/>
    <property type="project" value="UniProtKB-UniRule"/>
</dbReference>
<dbReference type="GO" id="GO:0006308">
    <property type="term" value="P:DNA catabolic process"/>
    <property type="evidence" value="ECO:0007669"/>
    <property type="project" value="UniProtKB-UniRule"/>
</dbReference>
<dbReference type="Gene3D" id="1.10.287.1040">
    <property type="entry name" value="Exonuclease VII, small subunit"/>
    <property type="match status" value="1"/>
</dbReference>
<dbReference type="HAMAP" id="MF_00337">
    <property type="entry name" value="Exonuc_7_S"/>
    <property type="match status" value="1"/>
</dbReference>
<dbReference type="InterPro" id="IPR003761">
    <property type="entry name" value="Exonuc_VII_S"/>
</dbReference>
<dbReference type="InterPro" id="IPR037004">
    <property type="entry name" value="Exonuc_VII_ssu_sf"/>
</dbReference>
<dbReference type="NCBIfam" id="NF002138">
    <property type="entry name" value="PRK00977.1-2"/>
    <property type="match status" value="1"/>
</dbReference>
<dbReference type="NCBIfam" id="TIGR01280">
    <property type="entry name" value="xseB"/>
    <property type="match status" value="1"/>
</dbReference>
<dbReference type="PANTHER" id="PTHR34137">
    <property type="entry name" value="EXODEOXYRIBONUCLEASE 7 SMALL SUBUNIT"/>
    <property type="match status" value="1"/>
</dbReference>
<dbReference type="PANTHER" id="PTHR34137:SF1">
    <property type="entry name" value="EXODEOXYRIBONUCLEASE 7 SMALL SUBUNIT"/>
    <property type="match status" value="1"/>
</dbReference>
<dbReference type="Pfam" id="PF02609">
    <property type="entry name" value="Exonuc_VII_S"/>
    <property type="match status" value="1"/>
</dbReference>
<dbReference type="PIRSF" id="PIRSF006488">
    <property type="entry name" value="Exonuc_VII_S"/>
    <property type="match status" value="1"/>
</dbReference>
<dbReference type="SUPFAM" id="SSF116842">
    <property type="entry name" value="XseB-like"/>
    <property type="match status" value="1"/>
</dbReference>
<proteinExistence type="inferred from homology"/>
<sequence length="71" mass="7895">MSTKKTFEENLQDLEAIVTKLETGDVALEDAIAEFQKGMVLSKDLQKTLEDAEKTLVKVMQADGTEMEMDA</sequence>